<feature type="chain" id="PRO_0000284726" description="Protein Daple">
    <location>
        <begin position="1"/>
        <end position="2009"/>
    </location>
</feature>
<feature type="domain" description="Calponin-homology (CH)" evidence="3">
    <location>
        <begin position="11"/>
        <end position="131"/>
    </location>
</feature>
<feature type="region of interest" description="Disordered" evidence="4">
    <location>
        <begin position="221"/>
        <end position="251"/>
    </location>
</feature>
<feature type="region of interest" description="Disordered" evidence="4">
    <location>
        <begin position="1002"/>
        <end position="1036"/>
    </location>
</feature>
<feature type="region of interest" description="Disordered" evidence="4">
    <location>
        <begin position="1410"/>
        <end position="1716"/>
    </location>
</feature>
<feature type="region of interest" description="Disordered" evidence="4">
    <location>
        <begin position="1757"/>
        <end position="1787"/>
    </location>
</feature>
<feature type="region of interest" description="Disordered" evidence="4">
    <location>
        <begin position="1808"/>
        <end position="2009"/>
    </location>
</feature>
<feature type="region of interest" description="DVL1-binding" evidence="5">
    <location>
        <begin position="2007"/>
        <end position="2009"/>
    </location>
</feature>
<feature type="coiled-coil region" evidence="2">
    <location>
        <begin position="247"/>
        <end position="425"/>
    </location>
</feature>
<feature type="coiled-coil region" evidence="2">
    <location>
        <begin position="456"/>
        <end position="1008"/>
    </location>
</feature>
<feature type="coiled-coil region" evidence="2">
    <location>
        <begin position="1190"/>
        <end position="1384"/>
    </location>
</feature>
<feature type="short sequence motif" description="GBA" evidence="1">
    <location>
        <begin position="1652"/>
        <end position="1683"/>
    </location>
</feature>
<feature type="short sequence motif" description="PDZ-binding" evidence="2">
    <location>
        <begin position="2006"/>
        <end position="2009"/>
    </location>
</feature>
<feature type="compositionally biased region" description="Low complexity" evidence="4">
    <location>
        <begin position="232"/>
        <end position="245"/>
    </location>
</feature>
<feature type="compositionally biased region" description="Basic and acidic residues" evidence="4">
    <location>
        <begin position="1025"/>
        <end position="1036"/>
    </location>
</feature>
<feature type="compositionally biased region" description="Basic and acidic residues" evidence="4">
    <location>
        <begin position="1410"/>
        <end position="1419"/>
    </location>
</feature>
<feature type="compositionally biased region" description="Low complexity" evidence="4">
    <location>
        <begin position="1430"/>
        <end position="1439"/>
    </location>
</feature>
<feature type="compositionally biased region" description="Polar residues" evidence="4">
    <location>
        <begin position="1440"/>
        <end position="1449"/>
    </location>
</feature>
<feature type="compositionally biased region" description="Low complexity" evidence="4">
    <location>
        <begin position="1510"/>
        <end position="1524"/>
    </location>
</feature>
<feature type="compositionally biased region" description="Low complexity" evidence="4">
    <location>
        <begin position="1562"/>
        <end position="1581"/>
    </location>
</feature>
<feature type="compositionally biased region" description="Basic and acidic residues" evidence="4">
    <location>
        <begin position="1681"/>
        <end position="1697"/>
    </location>
</feature>
<feature type="compositionally biased region" description="Polar residues" evidence="4">
    <location>
        <begin position="1761"/>
        <end position="1783"/>
    </location>
</feature>
<feature type="compositionally biased region" description="Basic and acidic residues" evidence="4">
    <location>
        <begin position="1866"/>
        <end position="1883"/>
    </location>
</feature>
<feature type="compositionally biased region" description="Polar residues" evidence="4">
    <location>
        <begin position="1898"/>
        <end position="1911"/>
    </location>
</feature>
<feature type="compositionally biased region" description="Gly residues" evidence="4">
    <location>
        <begin position="1943"/>
        <end position="1954"/>
    </location>
</feature>
<feature type="compositionally biased region" description="Polar residues" evidence="4">
    <location>
        <begin position="1981"/>
        <end position="1991"/>
    </location>
</feature>
<feature type="modified residue" description="Phosphoserine" evidence="1">
    <location>
        <position position="227"/>
    </location>
</feature>
<feature type="modified residue" description="Phosphoserine" evidence="1">
    <location>
        <position position="239"/>
    </location>
</feature>
<feature type="modified residue" description="Phosphoserine" evidence="1">
    <location>
        <position position="486"/>
    </location>
</feature>
<feature type="modified residue" description="Phosphoserine" evidence="1">
    <location>
        <position position="1435"/>
    </location>
</feature>
<feature type="modified residue" description="Phosphoserine" evidence="1">
    <location>
        <position position="1592"/>
    </location>
</feature>
<feature type="modified residue" description="Phosphoserine" evidence="1">
    <location>
        <position position="1798"/>
    </location>
</feature>
<feature type="splice variant" id="VSP_052377" description="In isoform 2." evidence="8">
    <original>K</original>
    <variation>KAGSLHLQ</variation>
    <location>
        <position position="509"/>
    </location>
</feature>
<feature type="mutagenesis site" description="Abolishes binding to DVL1." evidence="5">
    <original>G</original>
    <variation>A</variation>
    <location>
        <position position="2007"/>
    </location>
</feature>
<feature type="mutagenesis site" description="Abolishes binding to DVL1." evidence="5">
    <original>V</original>
    <variation>A</variation>
    <location>
        <position position="2009"/>
    </location>
</feature>
<name>DAPLE_MOUSE</name>
<organism>
    <name type="scientific">Mus musculus</name>
    <name type="common">Mouse</name>
    <dbReference type="NCBI Taxonomy" id="10090"/>
    <lineage>
        <taxon>Eukaryota</taxon>
        <taxon>Metazoa</taxon>
        <taxon>Chordata</taxon>
        <taxon>Craniata</taxon>
        <taxon>Vertebrata</taxon>
        <taxon>Euteleostomi</taxon>
        <taxon>Mammalia</taxon>
        <taxon>Eutheria</taxon>
        <taxon>Euarchontoglires</taxon>
        <taxon>Glires</taxon>
        <taxon>Rodentia</taxon>
        <taxon>Myomorpha</taxon>
        <taxon>Muroidea</taxon>
        <taxon>Muridae</taxon>
        <taxon>Murinae</taxon>
        <taxon>Mus</taxon>
        <taxon>Mus</taxon>
    </lineage>
</organism>
<sequence>MDVTVSQLVELFLQSPLVTWVKTFGSFGSGHQDNLTLYMDLVDGIFLNQIMLQIDPRPSNQRINKHVNNDVNLRIQNLSILVRNIKTYYQEVLQQLIVMNLPNVLMIGKDPLSGKSMEEIKKVLLLVLGCAVQCERKEEFIERIKQLDIETQAGIVAHIQEVTHNQENVFDLQWLDLPDVAPEELEALSRNMVFHLRRLIDERDECTELIVDLTQERDYLQTQQPPSPGKFSSPDSTPSPTSSLSSEDKQHLAVELADTKARLRRVRQELEEKTEQLADTRHEVDQLVLELQKAKQDNIQLAADARSARAYRDELDSLREKANRVERLEMDLVRCKEKLHDVDFYKARMEELREDNIILIETKAMLEEQLTASRARSDKVHELEKENLQLKSKLHDLELDRDADKKQIEKLLEEYMVLEMAQKQSMKESAHLGWELEQLSKNADLSDASRKSFVFELNECASSRILKLEKENQSLQSTIQGLRDTSLALEESSLKYGELEKENQQLSKKIEKLQTQLEREKQSNQDLETLSEELIREKEQLQSGMEALKADRARQIKDLEQEKGHLHQAVWSLRERPQVNSTKDVEKENRALHQAVTEAGSKLSQLELEKQQLHRDLEEAKEKGEQAEALEKELHRLEKENEQLTKEVTSLKAATEKVEALEHQSQGLELENRSLRKSLDTLQNVSVQLEGLERDKQQLGQENLELRKMVEAMRFTSAKMAQIETENRQLEREKEELRRDVELLKTLSKKSERLELSYQSVSAENLQLQHSLESSTHKSQALQRELSQLEAERQALRRDLETLQLTHKQLEGAEEDRKALEQEVAQLEKDKKLLEKEARRLWQQVELKDAILDDSAAKLSAAEKESRALDKELARCRDVGSKLKELEKDNRDLTKQVTMHTRTLTTLREDLVLEKLKSQQLSSELDKLSQELEKVGLSKDLLLQEDDGHGDGKGKTESALKTTLAMKEEKIVFLEAQVEEKESLSRQLQIELQMIKKEHEQLRQTQEGGDKAQNALKRPPGKVTSHQEKEAWEPSHKEATMELLRVKDRAIELERSNAALQAERQLLKEQLQHLETQNVSFSSQILTLQKQSAFLQEHTTTLQTQTAKLQVENSTLSSQNAALSAQYTVLQSQQAAKEAEHEGLQQQQEQLAAVYEALLQDHKHLGTLYECQSSEYEALIRQHSCLKTLHRNLELEHKELGERHGDLQQRKAELEELEKVLSTEREALEREQKTNAIATSENQRLRGELDRISFLHQQLKGEYEELHAHTKELKTSLNNSQLELSRWQVRFDELKEQHQSMDISLTKMDNHCELLSRLKGNLEEENHHLLSQIQLLSQQNQMLLEQNMESKEQYHEEQKQYIDKLNALRRHKEKLEEKIMDQYKFYDPAPKKKNHWIGAKALVKLIKPKKEGSRERLKSTTDSPPWQLEPSDPASPSPSQALRSQTENPDNPPSGPNCVEERDTHNGPVGKGPGDLKPKRGSPRGGSVDRTDTSTDPAVKSWPSEPGSRTFSTSATTAALSSSTPIPKHLGRTKGCNSDDNLCEPSSEPDGPYHRQQASRPNSLESSRNASSNSSPLSLKGSSDHLHSRCESFSSADLIPSRDPATLSRDGNTSGRGLLGRHEYPPPRNGPVSQETIQKKGAASTHTGVRPHSASPSSEMVTLEEFLEESNRGGSPTHDTPSCRDDLLSDYFRKAHDPPALGGQPGPPARKDGAKMPTSFVAPTIKMSINTSEGQQLKPGHYVKPNLRPSEAEALAGMPSRQVQPPQSLSLGRPRQTTMTQNCHMPVSRSASLSRAFSLASADLLRASGPEACRPESPQKPGGHEAAGARETSTHSLQGSHILARERTPIVGKADSPSPGQGTRGRPLDTRRFSLAPPKEERLAPLQQSATAPALATGCSSGSNPQIQHFSPTVAPAVRTKSKVPQHSGEVATVAPVRPGLGTSEGDGGPGHGYSEGLLTKSPGRSSDLPPHVKRGPDDFSQGSSSKSTPASPEPGGDPQTVWYEYGCV</sequence>
<gene>
    <name type="primary">Ccdc88c</name>
    <name type="synonym">Daple</name>
</gene>
<evidence type="ECO:0000250" key="1">
    <source>
        <dbReference type="UniProtKB" id="Q9P219"/>
    </source>
</evidence>
<evidence type="ECO:0000255" key="2"/>
<evidence type="ECO:0000255" key="3">
    <source>
        <dbReference type="PROSITE-ProRule" id="PRU00044"/>
    </source>
</evidence>
<evidence type="ECO:0000256" key="4">
    <source>
        <dbReference type="SAM" id="MobiDB-lite"/>
    </source>
</evidence>
<evidence type="ECO:0000269" key="5">
    <source>
    </source>
</evidence>
<evidence type="ECO:0000269" key="6">
    <source>
    </source>
</evidence>
<evidence type="ECO:0000269" key="7">
    <source>
    </source>
</evidence>
<evidence type="ECO:0000303" key="8">
    <source>
    </source>
</evidence>
<evidence type="ECO:0000305" key="9"/>
<evidence type="ECO:0000312" key="10">
    <source>
        <dbReference type="EMBL" id="AAR08446.1"/>
    </source>
</evidence>
<evidence type="ECO:0000312" key="11">
    <source>
        <dbReference type="EMBL" id="BAE23287.1"/>
    </source>
</evidence>
<protein>
    <recommendedName>
        <fullName>Protein Daple</fullName>
    </recommendedName>
    <alternativeName>
        <fullName>Coiled-coil domain-containing protein 88C</fullName>
    </alternativeName>
    <alternativeName>
        <fullName>Dvl-associating protein with a high frequency of leucine residues</fullName>
    </alternativeName>
</protein>
<reference evidence="9 10" key="1">
    <citation type="journal article" date="2003" name="Genes Cells">
        <title>Identification and characterization of a novel Dvl-binding protein that suppresses Wnt signalling pathway.</title>
        <authorList>
            <person name="Oshita A."/>
            <person name="Kishida S."/>
            <person name="Kobayashi H."/>
            <person name="Michiue T."/>
            <person name="Asahara T."/>
            <person name="Asashima M."/>
            <person name="Kikuchi A."/>
        </authorList>
    </citation>
    <scope>NUCLEOTIDE SEQUENCE [MRNA] (ISOFORM 1)</scope>
    <scope>INTERACTION WITH DVL1</scope>
    <scope>HOMOOLIGOMERIZATION</scope>
    <scope>MUTAGENESIS OF GLY-2007 AND VAL-2009</scope>
    <source>
        <tissue evidence="5">Brain</tissue>
    </source>
</reference>
<reference evidence="9 11" key="2">
    <citation type="journal article" date="2005" name="Science">
        <title>The transcriptional landscape of the mammalian genome.</title>
        <authorList>
            <person name="Carninci P."/>
            <person name="Kasukawa T."/>
            <person name="Katayama S."/>
            <person name="Gough J."/>
            <person name="Frith M.C."/>
            <person name="Maeda N."/>
            <person name="Oyama R."/>
            <person name="Ravasi T."/>
            <person name="Lenhard B."/>
            <person name="Wells C."/>
            <person name="Kodzius R."/>
            <person name="Shimokawa K."/>
            <person name="Bajic V.B."/>
            <person name="Brenner S.E."/>
            <person name="Batalov S."/>
            <person name="Forrest A.R."/>
            <person name="Zavolan M."/>
            <person name="Davis M.J."/>
            <person name="Wilming L.G."/>
            <person name="Aidinis V."/>
            <person name="Allen J.E."/>
            <person name="Ambesi-Impiombato A."/>
            <person name="Apweiler R."/>
            <person name="Aturaliya R.N."/>
            <person name="Bailey T.L."/>
            <person name="Bansal M."/>
            <person name="Baxter L."/>
            <person name="Beisel K.W."/>
            <person name="Bersano T."/>
            <person name="Bono H."/>
            <person name="Chalk A.M."/>
            <person name="Chiu K.P."/>
            <person name="Choudhary V."/>
            <person name="Christoffels A."/>
            <person name="Clutterbuck D.R."/>
            <person name="Crowe M.L."/>
            <person name="Dalla E."/>
            <person name="Dalrymple B.P."/>
            <person name="de Bono B."/>
            <person name="Della Gatta G."/>
            <person name="di Bernardo D."/>
            <person name="Down T."/>
            <person name="Engstrom P."/>
            <person name="Fagiolini M."/>
            <person name="Faulkner G."/>
            <person name="Fletcher C.F."/>
            <person name="Fukushima T."/>
            <person name="Furuno M."/>
            <person name="Futaki S."/>
            <person name="Gariboldi M."/>
            <person name="Georgii-Hemming P."/>
            <person name="Gingeras T.R."/>
            <person name="Gojobori T."/>
            <person name="Green R.E."/>
            <person name="Gustincich S."/>
            <person name="Harbers M."/>
            <person name="Hayashi Y."/>
            <person name="Hensch T.K."/>
            <person name="Hirokawa N."/>
            <person name="Hill D."/>
            <person name="Huminiecki L."/>
            <person name="Iacono M."/>
            <person name="Ikeo K."/>
            <person name="Iwama A."/>
            <person name="Ishikawa T."/>
            <person name="Jakt M."/>
            <person name="Kanapin A."/>
            <person name="Katoh M."/>
            <person name="Kawasawa Y."/>
            <person name="Kelso J."/>
            <person name="Kitamura H."/>
            <person name="Kitano H."/>
            <person name="Kollias G."/>
            <person name="Krishnan S.P."/>
            <person name="Kruger A."/>
            <person name="Kummerfeld S.K."/>
            <person name="Kurochkin I.V."/>
            <person name="Lareau L.F."/>
            <person name="Lazarevic D."/>
            <person name="Lipovich L."/>
            <person name="Liu J."/>
            <person name="Liuni S."/>
            <person name="McWilliam S."/>
            <person name="Madan Babu M."/>
            <person name="Madera M."/>
            <person name="Marchionni L."/>
            <person name="Matsuda H."/>
            <person name="Matsuzawa S."/>
            <person name="Miki H."/>
            <person name="Mignone F."/>
            <person name="Miyake S."/>
            <person name="Morris K."/>
            <person name="Mottagui-Tabar S."/>
            <person name="Mulder N."/>
            <person name="Nakano N."/>
            <person name="Nakauchi H."/>
            <person name="Ng P."/>
            <person name="Nilsson R."/>
            <person name="Nishiguchi S."/>
            <person name="Nishikawa S."/>
            <person name="Nori F."/>
            <person name="Ohara O."/>
            <person name="Okazaki Y."/>
            <person name="Orlando V."/>
            <person name="Pang K.C."/>
            <person name="Pavan W.J."/>
            <person name="Pavesi G."/>
            <person name="Pesole G."/>
            <person name="Petrovsky N."/>
            <person name="Piazza S."/>
            <person name="Reed J."/>
            <person name="Reid J.F."/>
            <person name="Ring B.Z."/>
            <person name="Ringwald M."/>
            <person name="Rost B."/>
            <person name="Ruan Y."/>
            <person name="Salzberg S.L."/>
            <person name="Sandelin A."/>
            <person name="Schneider C."/>
            <person name="Schoenbach C."/>
            <person name="Sekiguchi K."/>
            <person name="Semple C.A."/>
            <person name="Seno S."/>
            <person name="Sessa L."/>
            <person name="Sheng Y."/>
            <person name="Shibata Y."/>
            <person name="Shimada H."/>
            <person name="Shimada K."/>
            <person name="Silva D."/>
            <person name="Sinclair B."/>
            <person name="Sperling S."/>
            <person name="Stupka E."/>
            <person name="Sugiura K."/>
            <person name="Sultana R."/>
            <person name="Takenaka Y."/>
            <person name="Taki K."/>
            <person name="Tammoja K."/>
            <person name="Tan S.L."/>
            <person name="Tang S."/>
            <person name="Taylor M.S."/>
            <person name="Tegner J."/>
            <person name="Teichmann S.A."/>
            <person name="Ueda H.R."/>
            <person name="van Nimwegen E."/>
            <person name="Verardo R."/>
            <person name="Wei C.L."/>
            <person name="Yagi K."/>
            <person name="Yamanishi H."/>
            <person name="Zabarovsky E."/>
            <person name="Zhu S."/>
            <person name="Zimmer A."/>
            <person name="Hide W."/>
            <person name="Bult C."/>
            <person name="Grimmond S.M."/>
            <person name="Teasdale R.D."/>
            <person name="Liu E.T."/>
            <person name="Brusic V."/>
            <person name="Quackenbush J."/>
            <person name="Wahlestedt C."/>
            <person name="Mattick J.S."/>
            <person name="Hume D.A."/>
            <person name="Kai C."/>
            <person name="Sasaki D."/>
            <person name="Tomaru Y."/>
            <person name="Fukuda S."/>
            <person name="Kanamori-Katayama M."/>
            <person name="Suzuki M."/>
            <person name="Aoki J."/>
            <person name="Arakawa T."/>
            <person name="Iida J."/>
            <person name="Imamura K."/>
            <person name="Itoh M."/>
            <person name="Kato T."/>
            <person name="Kawaji H."/>
            <person name="Kawagashira N."/>
            <person name="Kawashima T."/>
            <person name="Kojima M."/>
            <person name="Kondo S."/>
            <person name="Konno H."/>
            <person name="Nakano K."/>
            <person name="Ninomiya N."/>
            <person name="Nishio T."/>
            <person name="Okada M."/>
            <person name="Plessy C."/>
            <person name="Shibata K."/>
            <person name="Shiraki T."/>
            <person name="Suzuki S."/>
            <person name="Tagami M."/>
            <person name="Waki K."/>
            <person name="Watahiki A."/>
            <person name="Okamura-Oho Y."/>
            <person name="Suzuki H."/>
            <person name="Kawai J."/>
            <person name="Hayashizaki Y."/>
        </authorList>
    </citation>
    <scope>NUCLEOTIDE SEQUENCE [LARGE SCALE MRNA] OF 1-966 (ISOFORM 2)</scope>
    <source>
        <strain evidence="11">C57BL/6J</strain>
        <tissue evidence="11">Urinary bladder</tissue>
    </source>
</reference>
<reference key="3">
    <citation type="journal article" date="2010" name="Cell">
        <title>A tissue-specific atlas of mouse protein phosphorylation and expression.</title>
        <authorList>
            <person name="Huttlin E.L."/>
            <person name="Jedrychowski M.P."/>
            <person name="Elias J.E."/>
            <person name="Goswami T."/>
            <person name="Rad R."/>
            <person name="Beausoleil S.A."/>
            <person name="Villen J."/>
            <person name="Haas W."/>
            <person name="Sowa M.E."/>
            <person name="Gygi S.P."/>
        </authorList>
    </citation>
    <scope>IDENTIFICATION BY MASS SPECTROMETRY [LARGE SCALE ANALYSIS]</scope>
    <source>
        <tissue>Spleen</tissue>
        <tissue>Testis</tissue>
    </source>
</reference>
<reference key="4">
    <citation type="journal article" date="2019" name="J. Cell Biol.">
        <title>GPCR-independent activation of G proteins promotes apical cell constriction in vivo.</title>
        <authorList>
            <person name="Marivin A."/>
            <person name="Morozova V."/>
            <person name="Walawalkar I."/>
            <person name="Leyme A."/>
            <person name="Kretov D.A."/>
            <person name="Cifuentes D."/>
            <person name="Dominguez I."/>
            <person name="Garcia-Marcos M."/>
        </authorList>
    </citation>
    <scope>SUBCELLULAR LOCATION</scope>
</reference>
<accession>Q6VGS5</accession>
<accession>Q3UVI2</accession>
<dbReference type="EMBL" id="AY339881">
    <property type="protein sequence ID" value="AAR08446.1"/>
    <property type="molecule type" value="mRNA"/>
</dbReference>
<dbReference type="EMBL" id="AK137260">
    <property type="protein sequence ID" value="BAE23287.1"/>
    <property type="molecule type" value="mRNA"/>
</dbReference>
<dbReference type="CCDS" id="CCDS26110.1">
    <molecule id="Q6VGS5-1"/>
</dbReference>
<dbReference type="RefSeq" id="NP_080957.2">
    <molecule id="Q6VGS5-1"/>
    <property type="nucleotide sequence ID" value="NM_026681.4"/>
</dbReference>
<dbReference type="SMR" id="Q6VGS5"/>
<dbReference type="BioGRID" id="212810">
    <property type="interactions" value="8"/>
</dbReference>
<dbReference type="FunCoup" id="Q6VGS5">
    <property type="interactions" value="1224"/>
</dbReference>
<dbReference type="IntAct" id="Q6VGS5">
    <property type="interactions" value="4"/>
</dbReference>
<dbReference type="MINT" id="Q6VGS5"/>
<dbReference type="STRING" id="10090.ENSMUSP00000068629"/>
<dbReference type="GlyGen" id="Q6VGS5">
    <property type="glycosylation" value="4 sites, 2 N-linked glycans (2 sites)"/>
</dbReference>
<dbReference type="iPTMnet" id="Q6VGS5"/>
<dbReference type="PhosphoSitePlus" id="Q6VGS5"/>
<dbReference type="PaxDb" id="10090-ENSMUSP00000082177"/>
<dbReference type="PeptideAtlas" id="Q6VGS5"/>
<dbReference type="ProteomicsDB" id="279825">
    <molecule id="Q6VGS5-1"/>
</dbReference>
<dbReference type="ProteomicsDB" id="279826">
    <molecule id="Q6VGS5-2"/>
</dbReference>
<dbReference type="Antibodypedia" id="105">
    <property type="antibodies" value="17 antibodies from 10 providers"/>
</dbReference>
<dbReference type="Ensembl" id="ENSMUST00000068411.5">
    <molecule id="Q6VGS5-1"/>
    <property type="protein sequence ID" value="ENSMUSP00000068629.4"/>
    <property type="gene ID" value="ENSMUSG00000021182.17"/>
</dbReference>
<dbReference type="Ensembl" id="ENSMUST00000085096.10">
    <molecule id="Q6VGS5-2"/>
    <property type="protein sequence ID" value="ENSMUSP00000082177.4"/>
    <property type="gene ID" value="ENSMUSG00000021182.17"/>
</dbReference>
<dbReference type="GeneID" id="68339"/>
<dbReference type="KEGG" id="mmu:68339"/>
<dbReference type="UCSC" id="uc007ote.1">
    <molecule id="Q6VGS5-1"/>
    <property type="organism name" value="mouse"/>
</dbReference>
<dbReference type="AGR" id="MGI:1915589"/>
<dbReference type="CTD" id="440193"/>
<dbReference type="MGI" id="MGI:1915589">
    <property type="gene designation" value="Ccdc88c"/>
</dbReference>
<dbReference type="VEuPathDB" id="HostDB:ENSMUSG00000021182"/>
<dbReference type="eggNOG" id="KOG4643">
    <property type="taxonomic scope" value="Eukaryota"/>
</dbReference>
<dbReference type="GeneTree" id="ENSGT00940000154785"/>
<dbReference type="HOGENOM" id="CLU_001421_1_1_1"/>
<dbReference type="InParanoid" id="Q6VGS5"/>
<dbReference type="OMA" id="RHNASDP"/>
<dbReference type="OrthoDB" id="10254988at2759"/>
<dbReference type="PhylomeDB" id="Q6VGS5"/>
<dbReference type="TreeFam" id="TF320231"/>
<dbReference type="BioGRID-ORCS" id="68339">
    <property type="hits" value="3 hits in 77 CRISPR screens"/>
</dbReference>
<dbReference type="ChiTaRS" id="Ccdc88c">
    <property type="organism name" value="mouse"/>
</dbReference>
<dbReference type="PRO" id="PR:Q6VGS5"/>
<dbReference type="Proteomes" id="UP000000589">
    <property type="component" value="Chromosome 12"/>
</dbReference>
<dbReference type="RNAct" id="Q6VGS5">
    <property type="molecule type" value="protein"/>
</dbReference>
<dbReference type="Bgee" id="ENSMUSG00000021182">
    <property type="expression patterns" value="Expressed in granulocyte and 215 other cell types or tissues"/>
</dbReference>
<dbReference type="ExpressionAtlas" id="Q6VGS5">
    <property type="expression patterns" value="baseline and differential"/>
</dbReference>
<dbReference type="GO" id="GO:0043296">
    <property type="term" value="C:apical junction complex"/>
    <property type="evidence" value="ECO:0000314"/>
    <property type="project" value="MGI"/>
</dbReference>
<dbReference type="GO" id="GO:0030054">
    <property type="term" value="C:cell junction"/>
    <property type="evidence" value="ECO:0000250"/>
    <property type="project" value="UniProtKB"/>
</dbReference>
<dbReference type="GO" id="GO:0005737">
    <property type="term" value="C:cytoplasm"/>
    <property type="evidence" value="ECO:0000250"/>
    <property type="project" value="UniProtKB"/>
</dbReference>
<dbReference type="GO" id="GO:0005829">
    <property type="term" value="C:cytosol"/>
    <property type="evidence" value="ECO:0000304"/>
    <property type="project" value="Reactome"/>
</dbReference>
<dbReference type="GO" id="GO:0005576">
    <property type="term" value="C:extracellular region"/>
    <property type="evidence" value="ECO:0007669"/>
    <property type="project" value="GOC"/>
</dbReference>
<dbReference type="GO" id="GO:0005109">
    <property type="term" value="F:frizzled binding"/>
    <property type="evidence" value="ECO:0000250"/>
    <property type="project" value="UniProtKB"/>
</dbReference>
<dbReference type="GO" id="GO:0001965">
    <property type="term" value="F:G-protein alpha-subunit binding"/>
    <property type="evidence" value="ECO:0000250"/>
    <property type="project" value="UniProtKB"/>
</dbReference>
<dbReference type="GO" id="GO:0005085">
    <property type="term" value="F:guanyl-nucleotide exchange factor activity"/>
    <property type="evidence" value="ECO:0000250"/>
    <property type="project" value="UniProtKB"/>
</dbReference>
<dbReference type="GO" id="GO:0008017">
    <property type="term" value="F:microtubule binding"/>
    <property type="evidence" value="ECO:0000314"/>
    <property type="project" value="MGI"/>
</dbReference>
<dbReference type="GO" id="GO:0030165">
    <property type="term" value="F:PDZ domain binding"/>
    <property type="evidence" value="ECO:0000353"/>
    <property type="project" value="UniProtKB"/>
</dbReference>
<dbReference type="GO" id="GO:0046983">
    <property type="term" value="F:protein dimerization activity"/>
    <property type="evidence" value="ECO:0000314"/>
    <property type="project" value="MGI"/>
</dbReference>
<dbReference type="GO" id="GO:0003383">
    <property type="term" value="P:apical constriction"/>
    <property type="evidence" value="ECO:0000250"/>
    <property type="project" value="UniProtKB"/>
</dbReference>
<dbReference type="GO" id="GO:0003341">
    <property type="term" value="P:cilium movement"/>
    <property type="evidence" value="ECO:0000315"/>
    <property type="project" value="MGI"/>
</dbReference>
<dbReference type="GO" id="GO:0044782">
    <property type="term" value="P:cilium organization"/>
    <property type="evidence" value="ECO:0000315"/>
    <property type="project" value="MGI"/>
</dbReference>
<dbReference type="GO" id="GO:0030705">
    <property type="term" value="P:cytoskeleton-dependent intracellular transport"/>
    <property type="evidence" value="ECO:0007669"/>
    <property type="project" value="InterPro"/>
</dbReference>
<dbReference type="GO" id="GO:0001578">
    <property type="term" value="P:microtubule bundle formation"/>
    <property type="evidence" value="ECO:0000315"/>
    <property type="project" value="MGI"/>
</dbReference>
<dbReference type="GO" id="GO:0120197">
    <property type="term" value="P:mucociliary clearance"/>
    <property type="evidence" value="ECO:0000315"/>
    <property type="project" value="MGI"/>
</dbReference>
<dbReference type="GO" id="GO:0090090">
    <property type="term" value="P:negative regulation of canonical Wnt signaling pathway"/>
    <property type="evidence" value="ECO:0000250"/>
    <property type="project" value="UniProtKB"/>
</dbReference>
<dbReference type="GO" id="GO:0007026">
    <property type="term" value="P:negative regulation of microtubule depolymerization"/>
    <property type="evidence" value="ECO:0000315"/>
    <property type="project" value="MGI"/>
</dbReference>
<dbReference type="GO" id="GO:0035567">
    <property type="term" value="P:non-canonical Wnt signaling pathway"/>
    <property type="evidence" value="ECO:0000250"/>
    <property type="project" value="UniProtKB"/>
</dbReference>
<dbReference type="GO" id="GO:0046330">
    <property type="term" value="P:positive regulation of JNK cascade"/>
    <property type="evidence" value="ECO:0000250"/>
    <property type="project" value="UniProtKB"/>
</dbReference>
<dbReference type="GO" id="GO:0031648">
    <property type="term" value="P:protein destabilization"/>
    <property type="evidence" value="ECO:0000315"/>
    <property type="project" value="UniProtKB"/>
</dbReference>
<dbReference type="GO" id="GO:1902691">
    <property type="term" value="P:respiratory basal cell differentiation"/>
    <property type="evidence" value="ECO:0000315"/>
    <property type="project" value="MGI"/>
</dbReference>
<dbReference type="GO" id="GO:0007264">
    <property type="term" value="P:small GTPase-mediated signal transduction"/>
    <property type="evidence" value="ECO:0000250"/>
    <property type="project" value="UniProtKB"/>
</dbReference>
<dbReference type="GO" id="GO:0060071">
    <property type="term" value="P:Wnt signaling pathway, planar cell polarity pathway"/>
    <property type="evidence" value="ECO:0000315"/>
    <property type="project" value="MGI"/>
</dbReference>
<dbReference type="CDD" id="cd22228">
    <property type="entry name" value="HkD_Daple"/>
    <property type="match status" value="1"/>
</dbReference>
<dbReference type="FunFam" id="1.10.418.10:FF:000035">
    <property type="entry name" value="girdin isoform X1"/>
    <property type="match status" value="1"/>
</dbReference>
<dbReference type="Gene3D" id="1.10.418.10">
    <property type="entry name" value="Calponin-like domain"/>
    <property type="match status" value="1"/>
</dbReference>
<dbReference type="InterPro" id="IPR001715">
    <property type="entry name" value="CH_dom"/>
</dbReference>
<dbReference type="InterPro" id="IPR036872">
    <property type="entry name" value="CH_dom_sf"/>
</dbReference>
<dbReference type="InterPro" id="IPR043936">
    <property type="entry name" value="HOOK_N"/>
</dbReference>
<dbReference type="PANTHER" id="PTHR18947">
    <property type="entry name" value="HOOK PROTEINS"/>
    <property type="match status" value="1"/>
</dbReference>
<dbReference type="PANTHER" id="PTHR18947:SF31">
    <property type="entry name" value="PROTEIN DAPLE"/>
    <property type="match status" value="1"/>
</dbReference>
<dbReference type="Pfam" id="PF19047">
    <property type="entry name" value="HOOK_N"/>
    <property type="match status" value="1"/>
</dbReference>
<dbReference type="SUPFAM" id="SSF116907">
    <property type="entry name" value="Hook domain"/>
    <property type="match status" value="1"/>
</dbReference>
<dbReference type="PROSITE" id="PS50021">
    <property type="entry name" value="CH"/>
    <property type="match status" value="1"/>
</dbReference>
<comment type="function">
    <text evidence="1">Required for activation of guanine nucleotide-binding proteins (G-proteins) during non-canonical Wnt signaling. Binds to ligand-activated Wnt receptor FZD7, displacing DVL1 from the FZD7 receptor and leading to inhibition of canonical Wnt signaling. Acts as a non-receptor guanine nucleotide exchange factor by also binding to guanine nucleotide-binding protein G(i) alpha (Gi-alpha) subunits, leading to their activation. Binding to Gi-alpha subunits displaces the beta and gamma subunits from the heterotrimeric G-protein complex, triggering non-canonical Wnt responses such as activation of RAC1 and PI3K-AKT signaling. Promotes apical constriction of cells via ARHGEF18.</text>
</comment>
<comment type="subunit">
    <text evidence="1 5">Homooligomer (PubMed:14750955). Interacts with DVL1 (via PDZ domain); dissociates following initiation of non-canonical Wnt signaling (PubMed:14750955). Interacts (via C-terminus) with ligand-activated Wnt receptor FZD7; competes with DVL1 for binding to FZD7 and displaces DVL1 from ligand-activated FZD7 (By similarity). Interacts (via GBA motif) with guanine nucleotide-binding protein G(i) alpha subunits GNAI1, GNAI2 and GNAI3 (inactive GDP-bound form); interacts with higher affinity with GNAI1 and GNAI3 than with GNAI2 and interaction leads to G(i) alpha subunit activation (By similarity). Does not interact with GNAO1 (By similarity).</text>
</comment>
<comment type="subcellular location">
    <subcellularLocation>
        <location evidence="1">Cytoplasm</location>
    </subcellularLocation>
    <subcellularLocation>
        <location evidence="7">Cell junction</location>
    </subcellularLocation>
    <text evidence="7">Enriched at apical cell junctions.</text>
</comment>
<comment type="alternative products">
    <event type="alternative splicing"/>
    <isoform>
        <id>Q6VGS5-1</id>
        <name evidence="5">1</name>
        <sequence type="displayed"/>
    </isoform>
    <isoform>
        <id>Q6VGS5-2</id>
        <name evidence="6">2</name>
        <sequence type="described" ref="VSP_052377"/>
    </isoform>
</comment>
<comment type="domain">
    <text evidence="1">The GBA (G-alpha binding and activating) motif mediates binding to the alpha subunits of guanine nucleotide-binding proteins (G proteins).</text>
</comment>
<comment type="domain">
    <text evidence="1">The PDZ domain is required for localization to apical junctions.</text>
</comment>
<comment type="similarity">
    <text evidence="9">Belongs to the CCDC88 family.</text>
</comment>
<keyword id="KW-0025">Alternative splicing</keyword>
<keyword id="KW-0965">Cell junction</keyword>
<keyword id="KW-0175">Coiled coil</keyword>
<keyword id="KW-0963">Cytoplasm</keyword>
<keyword id="KW-0344">Guanine-nucleotide releasing factor</keyword>
<keyword id="KW-0597">Phosphoprotein</keyword>
<keyword id="KW-1185">Reference proteome</keyword>
<keyword id="KW-0879">Wnt signaling pathway</keyword>
<proteinExistence type="evidence at protein level"/>